<feature type="chain" id="PRO_0000387486" description="17.7 kDa class II heat shock protein">
    <location>
        <begin position="1"/>
        <end position="156"/>
    </location>
</feature>
<feature type="domain" description="sHSP" evidence="1">
    <location>
        <begin position="39"/>
        <end position="156"/>
    </location>
</feature>
<feature type="sequence conflict" description="In Ref. 2; CAA61675." evidence="2" ref="2">
    <original>A</original>
    <variation>P</variation>
    <location>
        <position position="126"/>
    </location>
</feature>
<feature type="sequence conflict" description="In Ref. 2; CAA61675." evidence="2" ref="2">
    <original>D</original>
    <variation>G</variation>
    <location>
        <position position="130"/>
    </location>
</feature>
<feature type="sequence conflict" description="In Ref. 2; CAA61675." evidence="2" ref="2">
    <original>K</original>
    <variation>E</variation>
    <location>
        <position position="134"/>
    </location>
</feature>
<feature type="sequence conflict" description="In Ref. 2; CAA61675." evidence="2" ref="2">
    <original>I</original>
    <variation>N</variation>
    <location>
        <position position="137"/>
    </location>
</feature>
<feature type="sequence conflict" description="In Ref. 2; CAA61675." evidence="2" ref="2">
    <original>KKPKTIQVQV</original>
    <variation>RNPRQNKVQF</variation>
    <location>
        <begin position="146"/>
        <end position="155"/>
    </location>
</feature>
<gene>
    <name type="primary">HSP17.7</name>
    <name type="ordered locus">At5g12030</name>
    <name type="ORF">F14F18.200</name>
</gene>
<accession>O81822</accession>
<accession>Q38815</accession>
<accession>Q7DLL5</accession>
<evidence type="ECO:0000255" key="1">
    <source>
        <dbReference type="PROSITE-ProRule" id="PRU00285"/>
    </source>
</evidence>
<evidence type="ECO:0000305" key="2"/>
<organism>
    <name type="scientific">Arabidopsis thaliana</name>
    <name type="common">Mouse-ear cress</name>
    <dbReference type="NCBI Taxonomy" id="3702"/>
    <lineage>
        <taxon>Eukaryota</taxon>
        <taxon>Viridiplantae</taxon>
        <taxon>Streptophyta</taxon>
        <taxon>Embryophyta</taxon>
        <taxon>Tracheophyta</taxon>
        <taxon>Spermatophyta</taxon>
        <taxon>Magnoliopsida</taxon>
        <taxon>eudicotyledons</taxon>
        <taxon>Gunneridae</taxon>
        <taxon>Pentapetalae</taxon>
        <taxon>rosids</taxon>
        <taxon>malvids</taxon>
        <taxon>Brassicales</taxon>
        <taxon>Brassicaceae</taxon>
        <taxon>Camelineae</taxon>
        <taxon>Arabidopsis</taxon>
    </lineage>
</organism>
<protein>
    <recommendedName>
        <fullName>17.7 kDa class II heat shock protein</fullName>
    </recommendedName>
    <alternativeName>
        <fullName>17.7 kDa heat shock protein</fullName>
        <shortName>AtHsp17.7</shortName>
    </alternativeName>
</protein>
<name>HS177_ARATH</name>
<reference key="1">
    <citation type="journal article" date="1998" name="Mol. Gen. Genet.">
        <title>HSF3, a new heat shock factor from Arabidopsis thaliana, derepresses the heat shock response and confers thermotolerance when overexpressed in transgenic plants.</title>
        <authorList>
            <person name="Praendl R."/>
            <person name="Hinderhofer K."/>
            <person name="Eggers-Schumacher G."/>
            <person name="Schoeffl F."/>
        </authorList>
    </citation>
    <scope>NUCLEOTIDE SEQUENCE [MRNA]</scope>
    <source>
        <tissue>Leaf</tissue>
    </source>
</reference>
<reference key="2">
    <citation type="submission" date="1995-07" db="EMBL/GenBank/DDBJ databases">
        <title>mRNA for 17.6kDa HSP protein.</title>
        <authorList>
            <person name="Grellet F."/>
            <person name="Cooke R."/>
            <person name="Laudi M."/>
            <person name="Raynal M."/>
            <person name="Delseny M."/>
        </authorList>
    </citation>
    <scope>NUCLEOTIDE SEQUENCE [MRNA]</scope>
    <source>
        <strain>cv. Columbia</strain>
        <tissue>Seed</tissue>
    </source>
</reference>
<reference key="3">
    <citation type="journal article" date="2000" name="Nature">
        <title>Sequence and analysis of chromosome 5 of the plant Arabidopsis thaliana.</title>
        <authorList>
            <person name="Tabata S."/>
            <person name="Kaneko T."/>
            <person name="Nakamura Y."/>
            <person name="Kotani H."/>
            <person name="Kato T."/>
            <person name="Asamizu E."/>
            <person name="Miyajima N."/>
            <person name="Sasamoto S."/>
            <person name="Kimura T."/>
            <person name="Hosouchi T."/>
            <person name="Kawashima K."/>
            <person name="Kohara M."/>
            <person name="Matsumoto M."/>
            <person name="Matsuno A."/>
            <person name="Muraki A."/>
            <person name="Nakayama S."/>
            <person name="Nakazaki N."/>
            <person name="Naruo K."/>
            <person name="Okumura S."/>
            <person name="Shinpo S."/>
            <person name="Takeuchi C."/>
            <person name="Wada T."/>
            <person name="Watanabe A."/>
            <person name="Yamada M."/>
            <person name="Yasuda M."/>
            <person name="Sato S."/>
            <person name="de la Bastide M."/>
            <person name="Huang E."/>
            <person name="Spiegel L."/>
            <person name="Gnoj L."/>
            <person name="O'Shaughnessy A."/>
            <person name="Preston R."/>
            <person name="Habermann K."/>
            <person name="Murray J."/>
            <person name="Johnson D."/>
            <person name="Rohlfing T."/>
            <person name="Nelson J."/>
            <person name="Stoneking T."/>
            <person name="Pepin K."/>
            <person name="Spieth J."/>
            <person name="Sekhon M."/>
            <person name="Armstrong J."/>
            <person name="Becker M."/>
            <person name="Belter E."/>
            <person name="Cordum H."/>
            <person name="Cordes M."/>
            <person name="Courtney L."/>
            <person name="Courtney W."/>
            <person name="Dante M."/>
            <person name="Du H."/>
            <person name="Edwards J."/>
            <person name="Fryman J."/>
            <person name="Haakensen B."/>
            <person name="Lamar E."/>
            <person name="Latreille P."/>
            <person name="Leonard S."/>
            <person name="Meyer R."/>
            <person name="Mulvaney E."/>
            <person name="Ozersky P."/>
            <person name="Riley A."/>
            <person name="Strowmatt C."/>
            <person name="Wagner-McPherson C."/>
            <person name="Wollam A."/>
            <person name="Yoakum M."/>
            <person name="Bell M."/>
            <person name="Dedhia N."/>
            <person name="Parnell L."/>
            <person name="Shah R."/>
            <person name="Rodriguez M."/>
            <person name="Hoon See L."/>
            <person name="Vil D."/>
            <person name="Baker J."/>
            <person name="Kirchoff K."/>
            <person name="Toth K."/>
            <person name="King L."/>
            <person name="Bahret A."/>
            <person name="Miller B."/>
            <person name="Marra M.A."/>
            <person name="Martienssen R."/>
            <person name="McCombie W.R."/>
            <person name="Wilson R.K."/>
            <person name="Murphy G."/>
            <person name="Bancroft I."/>
            <person name="Volckaert G."/>
            <person name="Wambutt R."/>
            <person name="Duesterhoeft A."/>
            <person name="Stiekema W."/>
            <person name="Pohl T."/>
            <person name="Entian K.-D."/>
            <person name="Terryn N."/>
            <person name="Hartley N."/>
            <person name="Bent E."/>
            <person name="Johnson S."/>
            <person name="Langham S.-A."/>
            <person name="McCullagh B."/>
            <person name="Robben J."/>
            <person name="Grymonprez B."/>
            <person name="Zimmermann W."/>
            <person name="Ramsperger U."/>
            <person name="Wedler H."/>
            <person name="Balke K."/>
            <person name="Wedler E."/>
            <person name="Peters S."/>
            <person name="van Staveren M."/>
            <person name="Dirkse W."/>
            <person name="Mooijman P."/>
            <person name="Klein Lankhorst R."/>
            <person name="Weitzenegger T."/>
            <person name="Bothe G."/>
            <person name="Rose M."/>
            <person name="Hauf J."/>
            <person name="Berneiser S."/>
            <person name="Hempel S."/>
            <person name="Feldpausch M."/>
            <person name="Lamberth S."/>
            <person name="Villarroel R."/>
            <person name="Gielen J."/>
            <person name="Ardiles W."/>
            <person name="Bents O."/>
            <person name="Lemcke K."/>
            <person name="Kolesov G."/>
            <person name="Mayer K.F.X."/>
            <person name="Rudd S."/>
            <person name="Schoof H."/>
            <person name="Schueller C."/>
            <person name="Zaccaria P."/>
            <person name="Mewes H.-W."/>
            <person name="Bevan M."/>
            <person name="Fransz P.F."/>
        </authorList>
    </citation>
    <scope>NUCLEOTIDE SEQUENCE [LARGE SCALE GENOMIC DNA]</scope>
    <source>
        <strain>cv. Columbia</strain>
    </source>
</reference>
<reference key="4">
    <citation type="journal article" date="2017" name="Plant J.">
        <title>Araport11: a complete reannotation of the Arabidopsis thaliana reference genome.</title>
        <authorList>
            <person name="Cheng C.Y."/>
            <person name="Krishnakumar V."/>
            <person name="Chan A.P."/>
            <person name="Thibaud-Nissen F."/>
            <person name="Schobel S."/>
            <person name="Town C.D."/>
        </authorList>
    </citation>
    <scope>GENOME REANNOTATION</scope>
    <source>
        <strain>cv. Columbia</strain>
    </source>
</reference>
<reference key="5">
    <citation type="journal article" date="2003" name="Science">
        <title>Empirical analysis of transcriptional activity in the Arabidopsis genome.</title>
        <authorList>
            <person name="Yamada K."/>
            <person name="Lim J."/>
            <person name="Dale J.M."/>
            <person name="Chen H."/>
            <person name="Shinn P."/>
            <person name="Palm C.J."/>
            <person name="Southwick A.M."/>
            <person name="Wu H.C."/>
            <person name="Kim C.J."/>
            <person name="Nguyen M."/>
            <person name="Pham P.K."/>
            <person name="Cheuk R.F."/>
            <person name="Karlin-Newmann G."/>
            <person name="Liu S.X."/>
            <person name="Lam B."/>
            <person name="Sakano H."/>
            <person name="Wu T."/>
            <person name="Yu G."/>
            <person name="Miranda M."/>
            <person name="Quach H.L."/>
            <person name="Tripp M."/>
            <person name="Chang C.H."/>
            <person name="Lee J.M."/>
            <person name="Toriumi M.J."/>
            <person name="Chan M.M."/>
            <person name="Tang C.C."/>
            <person name="Onodera C.S."/>
            <person name="Deng J.M."/>
            <person name="Akiyama K."/>
            <person name="Ansari Y."/>
            <person name="Arakawa T."/>
            <person name="Banh J."/>
            <person name="Banno F."/>
            <person name="Bowser L."/>
            <person name="Brooks S.Y."/>
            <person name="Carninci P."/>
            <person name="Chao Q."/>
            <person name="Choy N."/>
            <person name="Enju A."/>
            <person name="Goldsmith A.D."/>
            <person name="Gurjal M."/>
            <person name="Hansen N.F."/>
            <person name="Hayashizaki Y."/>
            <person name="Johnson-Hopson C."/>
            <person name="Hsuan V.W."/>
            <person name="Iida K."/>
            <person name="Karnes M."/>
            <person name="Khan S."/>
            <person name="Koesema E."/>
            <person name="Ishida J."/>
            <person name="Jiang P.X."/>
            <person name="Jones T."/>
            <person name="Kawai J."/>
            <person name="Kamiya A."/>
            <person name="Meyers C."/>
            <person name="Nakajima M."/>
            <person name="Narusaka M."/>
            <person name="Seki M."/>
            <person name="Sakurai T."/>
            <person name="Satou M."/>
            <person name="Tamse R."/>
            <person name="Vaysberg M."/>
            <person name="Wallender E.K."/>
            <person name="Wong C."/>
            <person name="Yamamura Y."/>
            <person name="Yuan S."/>
            <person name="Shinozaki K."/>
            <person name="Davis R.W."/>
            <person name="Theologis A."/>
            <person name="Ecker J.R."/>
        </authorList>
    </citation>
    <scope>NUCLEOTIDE SEQUENCE [LARGE SCALE MRNA]</scope>
    <source>
        <strain>cv. Columbia</strain>
    </source>
</reference>
<reference key="6">
    <citation type="journal article" date="1996" name="Plant J.">
        <title>Further progress towards a catalogue of all Arabidopsis genes: analysis of a set of 5000 non-redundant ESTs.</title>
        <authorList>
            <person name="Cooke R."/>
            <person name="Raynal M."/>
            <person name="Laudie M."/>
            <person name="Grellet F."/>
            <person name="Delseny M."/>
            <person name="Morris P.-C."/>
            <person name="Guerrier D."/>
            <person name="Giraudat J."/>
            <person name="Quigley F."/>
            <person name="Clabault G."/>
            <person name="Li Y.-F."/>
            <person name="Mache R."/>
            <person name="Krivitzky M."/>
            <person name="Gy I.J.-J."/>
            <person name="Kreis M."/>
            <person name="Lecharny A."/>
            <person name="Parmentier Y."/>
            <person name="Marbach J."/>
            <person name="Fleck J."/>
            <person name="Clement B."/>
            <person name="Philipps G."/>
            <person name="Herve C."/>
            <person name="Bardet C."/>
            <person name="Tremousaygue D."/>
            <person name="Lescure B."/>
            <person name="Lacomme C."/>
            <person name="Roby D."/>
            <person name="Jourjon M.-F."/>
            <person name="Chabrier P."/>
            <person name="Charpenteau J.-L."/>
            <person name="Desprez T."/>
            <person name="Amselem J."/>
            <person name="Chiapello H."/>
            <person name="Hoefte H."/>
        </authorList>
    </citation>
    <scope>NUCLEOTIDE SEQUENCE [LARGE SCALE MRNA] OF 1-116</scope>
    <source>
        <strain>cv. Columbia</strain>
    </source>
</reference>
<comment type="subunit">
    <text>May form oligomeric structures.</text>
</comment>
<comment type="subcellular location">
    <subcellularLocation>
        <location evidence="2">Cytoplasm</location>
    </subcellularLocation>
</comment>
<comment type="similarity">
    <text evidence="1">Belongs to the small heat shock protein (HSP20) family.</text>
</comment>
<keyword id="KW-0963">Cytoplasm</keyword>
<keyword id="KW-1185">Reference proteome</keyword>
<keyword id="KW-0346">Stress response</keyword>
<dbReference type="EMBL" id="Y14070">
    <property type="protein sequence ID" value="CAA74399.1"/>
    <property type="molecule type" value="mRNA"/>
</dbReference>
<dbReference type="EMBL" id="X89504">
    <property type="protein sequence ID" value="CAA61675.1"/>
    <property type="molecule type" value="mRNA"/>
</dbReference>
<dbReference type="EMBL" id="AL163812">
    <property type="protein sequence ID" value="CAB87676.1"/>
    <property type="molecule type" value="Genomic_DNA"/>
</dbReference>
<dbReference type="EMBL" id="CP002688">
    <property type="protein sequence ID" value="AED91752.1"/>
    <property type="molecule type" value="Genomic_DNA"/>
</dbReference>
<dbReference type="EMBL" id="BT004180">
    <property type="protein sequence ID" value="AAO42199.1"/>
    <property type="molecule type" value="mRNA"/>
</dbReference>
<dbReference type="EMBL" id="BT006090">
    <property type="protein sequence ID" value="AAP04075.1"/>
    <property type="molecule type" value="mRNA"/>
</dbReference>
<dbReference type="EMBL" id="Z27013">
    <property type="protein sequence ID" value="CAA81565.1"/>
    <property type="molecule type" value="mRNA"/>
</dbReference>
<dbReference type="PIR" id="T48562">
    <property type="entry name" value="T48562"/>
</dbReference>
<dbReference type="RefSeq" id="NP_196764.1">
    <property type="nucleotide sequence ID" value="NM_121241.3"/>
</dbReference>
<dbReference type="SMR" id="O81822"/>
<dbReference type="FunCoup" id="O81822">
    <property type="interactions" value="155"/>
</dbReference>
<dbReference type="STRING" id="3702.O81822"/>
<dbReference type="GlyGen" id="O81822">
    <property type="glycosylation" value="1 site"/>
</dbReference>
<dbReference type="PaxDb" id="3702-AT5G12030.1"/>
<dbReference type="ProteomicsDB" id="232127"/>
<dbReference type="EnsemblPlants" id="AT5G12030.1">
    <property type="protein sequence ID" value="AT5G12030.1"/>
    <property type="gene ID" value="AT5G12030"/>
</dbReference>
<dbReference type="GeneID" id="831076"/>
<dbReference type="Gramene" id="AT5G12030.1">
    <property type="protein sequence ID" value="AT5G12030.1"/>
    <property type="gene ID" value="AT5G12030"/>
</dbReference>
<dbReference type="KEGG" id="ath:AT5G12030"/>
<dbReference type="Araport" id="AT5G12030"/>
<dbReference type="TAIR" id="AT5G12030">
    <property type="gene designation" value="HSP17.6A"/>
</dbReference>
<dbReference type="eggNOG" id="KOG0710">
    <property type="taxonomic scope" value="Eukaryota"/>
</dbReference>
<dbReference type="HOGENOM" id="CLU_046737_5_1_1"/>
<dbReference type="InParanoid" id="O81822"/>
<dbReference type="OMA" id="FGRFPIF"/>
<dbReference type="OrthoDB" id="1431247at2759"/>
<dbReference type="PhylomeDB" id="O81822"/>
<dbReference type="PRO" id="PR:O81822"/>
<dbReference type="Proteomes" id="UP000006548">
    <property type="component" value="Chromosome 5"/>
</dbReference>
<dbReference type="ExpressionAtlas" id="O81822">
    <property type="expression patterns" value="baseline and differential"/>
</dbReference>
<dbReference type="GO" id="GO:0005829">
    <property type="term" value="C:cytosol"/>
    <property type="evidence" value="ECO:0000304"/>
    <property type="project" value="TAIR"/>
</dbReference>
<dbReference type="GO" id="GO:0051082">
    <property type="term" value="F:unfolded protein binding"/>
    <property type="evidence" value="ECO:0000314"/>
    <property type="project" value="TAIR"/>
</dbReference>
<dbReference type="GO" id="GO:0071456">
    <property type="term" value="P:cellular response to hypoxia"/>
    <property type="evidence" value="ECO:0007007"/>
    <property type="project" value="TAIR"/>
</dbReference>
<dbReference type="GO" id="GO:0006972">
    <property type="term" value="P:hyperosmotic response"/>
    <property type="evidence" value="ECO:0000315"/>
    <property type="project" value="TAIR"/>
</dbReference>
<dbReference type="GO" id="GO:0006457">
    <property type="term" value="P:protein folding"/>
    <property type="evidence" value="ECO:0000314"/>
    <property type="project" value="TAIR"/>
</dbReference>
<dbReference type="CDD" id="cd06464">
    <property type="entry name" value="ACD_sHsps-like"/>
    <property type="match status" value="1"/>
</dbReference>
<dbReference type="FunFam" id="2.60.40.790:FF:000010">
    <property type="entry name" value="17.3 kDa class II heat shock protein-like"/>
    <property type="match status" value="1"/>
</dbReference>
<dbReference type="Gene3D" id="2.60.40.790">
    <property type="match status" value="1"/>
</dbReference>
<dbReference type="InterPro" id="IPR002068">
    <property type="entry name" value="A-crystallin/Hsp20_dom"/>
</dbReference>
<dbReference type="InterPro" id="IPR008978">
    <property type="entry name" value="HSP20-like_chaperone"/>
</dbReference>
<dbReference type="InterPro" id="IPR031107">
    <property type="entry name" value="Small_HSP"/>
</dbReference>
<dbReference type="PANTHER" id="PTHR11527">
    <property type="entry name" value="HEAT-SHOCK PROTEIN 20 FAMILY MEMBER"/>
    <property type="match status" value="1"/>
</dbReference>
<dbReference type="Pfam" id="PF00011">
    <property type="entry name" value="HSP20"/>
    <property type="match status" value="1"/>
</dbReference>
<dbReference type="SUPFAM" id="SSF49764">
    <property type="entry name" value="HSP20-like chaperones"/>
    <property type="match status" value="1"/>
</dbReference>
<dbReference type="PROSITE" id="PS01031">
    <property type="entry name" value="SHSP"/>
    <property type="match status" value="1"/>
</dbReference>
<proteinExistence type="evidence at transcript level"/>
<sequence>MDLEFGRFPIFSILEDMLEAPEEQTEKTRNNPSRAYMRDAKAMAATPADVIEHPDAYVFAVDMPGIKGDEIQVQIENENVLVVSGKRQRDNKENEGVKFVRMERRMGKFMRKFQLPDNADLEKISAACNDGVLKVTIPKLPPPEPKKPKTIQVQVA</sequence>